<accession>P40577</accession>
<accession>D6VVV6</accession>
<proteinExistence type="evidence at protein level"/>
<gene>
    <name type="primary">MND2</name>
    <name type="ordered locus">YIR025W</name>
</gene>
<reference key="1">
    <citation type="journal article" date="1997" name="Nature">
        <title>The nucleotide sequence of Saccharomyces cerevisiae chromosome IX.</title>
        <authorList>
            <person name="Churcher C.M."/>
            <person name="Bowman S."/>
            <person name="Badcock K."/>
            <person name="Bankier A.T."/>
            <person name="Brown D."/>
            <person name="Chillingworth T."/>
            <person name="Connor R."/>
            <person name="Devlin K."/>
            <person name="Gentles S."/>
            <person name="Hamlin N."/>
            <person name="Harris D.E."/>
            <person name="Horsnell T."/>
            <person name="Hunt S."/>
            <person name="Jagels K."/>
            <person name="Jones M."/>
            <person name="Lye G."/>
            <person name="Moule S."/>
            <person name="Odell C."/>
            <person name="Pearson D."/>
            <person name="Rajandream M.A."/>
            <person name="Rice P."/>
            <person name="Rowley N."/>
            <person name="Skelton J."/>
            <person name="Smith V."/>
            <person name="Walsh S.V."/>
            <person name="Whitehead S."/>
            <person name="Barrell B.G."/>
        </authorList>
    </citation>
    <scope>NUCLEOTIDE SEQUENCE [LARGE SCALE GENOMIC DNA]</scope>
    <source>
        <strain>ATCC 204508 / S288c</strain>
    </source>
</reference>
<reference key="2">
    <citation type="journal article" date="2014" name="G3 (Bethesda)">
        <title>The reference genome sequence of Saccharomyces cerevisiae: Then and now.</title>
        <authorList>
            <person name="Engel S.R."/>
            <person name="Dietrich F.S."/>
            <person name="Fisk D.G."/>
            <person name="Binkley G."/>
            <person name="Balakrishnan R."/>
            <person name="Costanzo M.C."/>
            <person name="Dwight S.S."/>
            <person name="Hitz B.C."/>
            <person name="Karra K."/>
            <person name="Nash R.S."/>
            <person name="Weng S."/>
            <person name="Wong E.D."/>
            <person name="Lloyd P."/>
            <person name="Skrzypek M.S."/>
            <person name="Miyasato S.R."/>
            <person name="Simison M."/>
            <person name="Cherry J.M."/>
        </authorList>
    </citation>
    <scope>GENOME REANNOTATION</scope>
    <source>
        <strain>ATCC 204508 / S288c</strain>
    </source>
</reference>
<reference key="3">
    <citation type="journal article" date="2002" name="Curr. Biol.">
        <title>Proteomics analysis identifies new components of the fission and budding yeast anaphase-promoting complexes.</title>
        <authorList>
            <person name="Yoon H.-J."/>
            <person name="Feoktistova A."/>
            <person name="Wolfe B.A."/>
            <person name="Jennings J.L."/>
            <person name="Link A.J."/>
            <person name="Gould K.L."/>
        </authorList>
    </citation>
    <scope>SUBUNIT</scope>
</reference>
<reference key="4">
    <citation type="journal article" date="2003" name="J. Biol. Chem.">
        <title>Mnd2 and Swm1 are core subunits of the Saccharomyces cerevisiae anaphase-promoting complex.</title>
        <authorList>
            <person name="Hall M.C."/>
            <person name="Torres M.P."/>
            <person name="Schroeder G.K."/>
            <person name="Borchers C.H."/>
        </authorList>
    </citation>
    <scope>SUBUNIT</scope>
    <scope>INTERACTION WITH APC1; APC5 AND CDC23</scope>
</reference>
<reference key="5">
    <citation type="journal article" date="2009" name="Science">
        <title>Global analysis of Cdk1 substrate phosphorylation sites provides insights into evolution.</title>
        <authorList>
            <person name="Holt L.J."/>
            <person name="Tuch B.B."/>
            <person name="Villen J."/>
            <person name="Johnson A.D."/>
            <person name="Gygi S.P."/>
            <person name="Morgan D.O."/>
        </authorList>
    </citation>
    <scope>PHOSPHORYLATION [LARGE SCALE ANALYSIS] AT SER-293</scope>
    <scope>IDENTIFICATION BY MASS SPECTROMETRY [LARGE SCALE ANALYSIS]</scope>
</reference>
<evidence type="ECO:0000256" key="1">
    <source>
        <dbReference type="SAM" id="MobiDB-lite"/>
    </source>
</evidence>
<evidence type="ECO:0000269" key="2">
    <source>
    </source>
</evidence>
<evidence type="ECO:0000269" key="3">
    <source>
    </source>
</evidence>
<evidence type="ECO:0000305" key="4"/>
<evidence type="ECO:0007744" key="5">
    <source>
    </source>
</evidence>
<evidence type="ECO:0007829" key="6">
    <source>
        <dbReference type="PDB" id="8A3T"/>
    </source>
</evidence>
<comment type="function">
    <text>Component of the anaphase promoting complex/cyclosome (APC/C), a cell cycle-regulated E3 ubiquitin-protein ligase complex that controls progression through mitosis and the G1 phase of the cell cycle. The APC/C is thought to confer substrate specificity and, in the presence of ubiquitin-conjugating E2 enzymes, it catalyzes the formation of protein-ubiquitin conjugates that are subsequently degraded by the 26S proteasome. In early mitosis, the APC/C is activated by CDC20 and targets securin PDS1, the B-type cyclin CLB5, and other anaphase inhibitory proteins for proteolysis, thereby triggering the separation of sister chromatids at the metaphase-to-anaphase transition. In late mitosis and in G1, degradation of CLB5 allows activation of the APC/C by CDH1, which is needed to destroy CDC20 and the B-type cyclin CLB2 to allow exit from mitosis and creating the low CDK state necessary for cytokinesis and for reforming prereplicative complexes in G1 prior to another round of replication.</text>
</comment>
<comment type="pathway">
    <text>Protein modification; protein ubiquitination.</text>
</comment>
<comment type="subunit">
    <text evidence="2 3">The APC/C is composed of at least 13 subunits that stay tightly associated throughout the cell cycle: APC1, APC2, APC4, APC5, APC9, APC11, CDC16, CDC23, CDC26, CDC27, DOC1, MND2 and SWM1. MND2 interacts directly with APC1, APC5 and CDC23.</text>
</comment>
<comment type="interaction">
    <interactant intactId="EBI-25433">
        <id>P40577</id>
    </interactant>
    <interactant intactId="EBI-29017">
        <id>P53886</id>
        <label>APC1</label>
    </interactant>
    <organismsDiffer>false</organismsDiffer>
    <experiments>4</experiments>
</comment>
<comment type="interaction">
    <interactant intactId="EBI-25433">
        <id>P40577</id>
    </interactant>
    <interactant intactId="EBI-33503">
        <id>Q12440</id>
        <label>APC2</label>
    </interactant>
    <organismsDiffer>false</organismsDiffer>
    <experiments>4</experiments>
</comment>
<comment type="interaction">
    <interactant intactId="EBI-25433">
        <id>P40577</id>
    </interactant>
    <interactant intactId="EBI-32842">
        <id>Q04601</id>
        <label>APC4</label>
    </interactant>
    <organismsDiffer>false</organismsDiffer>
    <experiments>6</experiments>
</comment>
<comment type="interaction">
    <interactant intactId="EBI-25433">
        <id>P40577</id>
    </interactant>
    <interactant intactId="EBI-35371">
        <id>Q08683</id>
        <label>APC5</label>
    </interactant>
    <organismsDiffer>false</organismsDiffer>
    <experiments>5</experiments>
</comment>
<comment type="interaction">
    <interactant intactId="EBI-25433">
        <id>P40577</id>
    </interactant>
    <interactant intactId="EBI-4216">
        <id>P16522</id>
        <label>CDC23</label>
    </interactant>
    <organismsDiffer>false</organismsDiffer>
    <experiments>4</experiments>
</comment>
<comment type="interaction">
    <interactant intactId="EBI-25433">
        <id>P40577</id>
    </interactant>
    <interactant intactId="EBI-33330">
        <id>Q12379</id>
        <label>SWM1</label>
    </interactant>
    <organismsDiffer>false</organismsDiffer>
    <experiments>5</experiments>
</comment>
<comment type="similarity">
    <text evidence="4">Belongs to the APC15 family.</text>
</comment>
<protein>
    <recommendedName>
        <fullName>Anaphase-promoting complex subunit MND2</fullName>
    </recommendedName>
    <alternativeName>
        <fullName>Meiotic nuclear division protein 2</fullName>
    </alternativeName>
</protein>
<keyword id="KW-0002">3D-structure</keyword>
<keyword id="KW-0131">Cell cycle</keyword>
<keyword id="KW-0132">Cell division</keyword>
<keyword id="KW-0498">Mitosis</keyword>
<keyword id="KW-0597">Phosphoprotein</keyword>
<keyword id="KW-1185">Reference proteome</keyword>
<keyword id="KW-0833">Ubl conjugation pathway</keyword>
<feature type="chain" id="PRO_0000096523" description="Anaphase-promoting complex subunit MND2">
    <location>
        <begin position="1"/>
        <end position="368"/>
    </location>
</feature>
<feature type="region of interest" description="Disordered" evidence="1">
    <location>
        <begin position="140"/>
        <end position="167"/>
    </location>
</feature>
<feature type="region of interest" description="Disordered" evidence="1">
    <location>
        <begin position="286"/>
        <end position="336"/>
    </location>
</feature>
<feature type="compositionally biased region" description="Basic and acidic residues" evidence="1">
    <location>
        <begin position="149"/>
        <end position="162"/>
    </location>
</feature>
<feature type="modified residue" description="Phosphoserine" evidence="5">
    <location>
        <position position="293"/>
    </location>
</feature>
<feature type="turn" evidence="6">
    <location>
        <begin position="4"/>
        <end position="6"/>
    </location>
</feature>
<feature type="helix" evidence="6">
    <location>
        <begin position="9"/>
        <end position="19"/>
    </location>
</feature>
<feature type="turn" evidence="6">
    <location>
        <begin position="70"/>
        <end position="72"/>
    </location>
</feature>
<feature type="strand" evidence="6">
    <location>
        <begin position="75"/>
        <end position="79"/>
    </location>
</feature>
<feature type="helix" evidence="6">
    <location>
        <begin position="86"/>
        <end position="88"/>
    </location>
</feature>
<feature type="helix" evidence="6">
    <location>
        <begin position="96"/>
        <end position="112"/>
    </location>
</feature>
<feature type="helix" evidence="6">
    <location>
        <begin position="113"/>
        <end position="115"/>
    </location>
</feature>
<feature type="helix" evidence="6">
    <location>
        <begin position="129"/>
        <end position="139"/>
    </location>
</feature>
<organism>
    <name type="scientific">Saccharomyces cerevisiae (strain ATCC 204508 / S288c)</name>
    <name type="common">Baker's yeast</name>
    <dbReference type="NCBI Taxonomy" id="559292"/>
    <lineage>
        <taxon>Eukaryota</taxon>
        <taxon>Fungi</taxon>
        <taxon>Dikarya</taxon>
        <taxon>Ascomycota</taxon>
        <taxon>Saccharomycotina</taxon>
        <taxon>Saccharomycetes</taxon>
        <taxon>Saccharomycetales</taxon>
        <taxon>Saccharomycetaceae</taxon>
        <taxon>Saccharomyces</taxon>
    </lineage>
</organism>
<dbReference type="EMBL" id="Z38061">
    <property type="protein sequence ID" value="CAA86185.1"/>
    <property type="molecule type" value="Genomic_DNA"/>
</dbReference>
<dbReference type="EMBL" id="BK006942">
    <property type="protein sequence ID" value="DAA08572.1"/>
    <property type="molecule type" value="Genomic_DNA"/>
</dbReference>
<dbReference type="PIR" id="S48487">
    <property type="entry name" value="S48487"/>
</dbReference>
<dbReference type="RefSeq" id="NP_012291.1">
    <property type="nucleotide sequence ID" value="NM_001179547.1"/>
</dbReference>
<dbReference type="PDB" id="8A3T">
    <property type="method" value="EM"/>
    <property type="resolution" value="3.50 A"/>
    <property type="chains" value="N=1-368"/>
</dbReference>
<dbReference type="PDB" id="8A5Y">
    <property type="method" value="EM"/>
    <property type="resolution" value="4.90 A"/>
    <property type="chains" value="N=1-368"/>
</dbReference>
<dbReference type="PDB" id="8A61">
    <property type="method" value="EM"/>
    <property type="resolution" value="5.40 A"/>
    <property type="chains" value="N=1-368"/>
</dbReference>
<dbReference type="PDBsum" id="8A3T"/>
<dbReference type="PDBsum" id="8A5Y"/>
<dbReference type="PDBsum" id="8A61"/>
<dbReference type="EMDB" id="EMD-15123"/>
<dbReference type="EMDB" id="EMD-15199"/>
<dbReference type="EMDB" id="EMD-15201"/>
<dbReference type="SMR" id="P40577"/>
<dbReference type="BioGRID" id="35016">
    <property type="interactions" value="68"/>
</dbReference>
<dbReference type="ComplexPortal" id="CPX-756">
    <property type="entry name" value="Anaphase-Promoting core complex"/>
</dbReference>
<dbReference type="ComplexPortal" id="CPX-760">
    <property type="entry name" value="Anaphase-Promoting Complex, CDC20 variant"/>
</dbReference>
<dbReference type="ComplexPortal" id="CPX-761">
    <property type="entry name" value="Anaphase-Promoting Complex, CDH1 variant"/>
</dbReference>
<dbReference type="ComplexPortal" id="CPX-762">
    <property type="entry name" value="Anaphase-Promoting complex AMA1 variant"/>
</dbReference>
<dbReference type="DIP" id="DIP-1536N"/>
<dbReference type="FunCoup" id="P40577">
    <property type="interactions" value="170"/>
</dbReference>
<dbReference type="IntAct" id="P40577">
    <property type="interactions" value="15"/>
</dbReference>
<dbReference type="MINT" id="P40577"/>
<dbReference type="STRING" id="4932.YIR025W"/>
<dbReference type="iPTMnet" id="P40577"/>
<dbReference type="PaxDb" id="4932-YIR025W"/>
<dbReference type="PeptideAtlas" id="P40577"/>
<dbReference type="EnsemblFungi" id="YIR025W_mRNA">
    <property type="protein sequence ID" value="YIR025W"/>
    <property type="gene ID" value="YIR025W"/>
</dbReference>
<dbReference type="GeneID" id="854843"/>
<dbReference type="KEGG" id="sce:YIR025W"/>
<dbReference type="AGR" id="SGD:S000001464"/>
<dbReference type="SGD" id="S000001464">
    <property type="gene designation" value="MND2"/>
</dbReference>
<dbReference type="VEuPathDB" id="FungiDB:YIR025W"/>
<dbReference type="HOGENOM" id="CLU_759012_0_0_1"/>
<dbReference type="InParanoid" id="P40577"/>
<dbReference type="OMA" id="HERYNMR"/>
<dbReference type="OrthoDB" id="4047136at2759"/>
<dbReference type="BioCyc" id="YEAST:G3O-31444-MONOMER"/>
<dbReference type="UniPathway" id="UPA00143"/>
<dbReference type="BioGRID-ORCS" id="854843">
    <property type="hits" value="0 hits in 10 CRISPR screens"/>
</dbReference>
<dbReference type="PRO" id="PR:P40577"/>
<dbReference type="Proteomes" id="UP000002311">
    <property type="component" value="Chromosome IX"/>
</dbReference>
<dbReference type="RNAct" id="P40577">
    <property type="molecule type" value="protein"/>
</dbReference>
<dbReference type="GO" id="GO:0005680">
    <property type="term" value="C:anaphase-promoting complex"/>
    <property type="evidence" value="ECO:0000314"/>
    <property type="project" value="SGD"/>
</dbReference>
<dbReference type="GO" id="GO:0005634">
    <property type="term" value="C:nucleus"/>
    <property type="evidence" value="ECO:0000314"/>
    <property type="project" value="SGD"/>
</dbReference>
<dbReference type="GO" id="GO:1990948">
    <property type="term" value="F:ubiquitin ligase inhibitor activity"/>
    <property type="evidence" value="ECO:0000314"/>
    <property type="project" value="SGD"/>
</dbReference>
<dbReference type="GO" id="GO:0031145">
    <property type="term" value="P:anaphase-promoting complex-dependent catabolic process"/>
    <property type="evidence" value="ECO:0000314"/>
    <property type="project" value="ComplexPortal"/>
</dbReference>
<dbReference type="GO" id="GO:0051301">
    <property type="term" value="P:cell division"/>
    <property type="evidence" value="ECO:0007669"/>
    <property type="project" value="UniProtKB-KW"/>
</dbReference>
<dbReference type="GO" id="GO:1902426">
    <property type="term" value="P:deactivation of mitotic spindle assembly checkpoint"/>
    <property type="evidence" value="ECO:0000315"/>
    <property type="project" value="SGD"/>
</dbReference>
<dbReference type="GO" id="GO:0000070">
    <property type="term" value="P:mitotic sister chromatid segregation"/>
    <property type="evidence" value="ECO:0000315"/>
    <property type="project" value="SGD"/>
</dbReference>
<dbReference type="GO" id="GO:1905785">
    <property type="term" value="P:negative regulation of anaphase-promoting complex-dependent catabolic process"/>
    <property type="evidence" value="ECO:0000316"/>
    <property type="project" value="SGD"/>
</dbReference>
<dbReference type="GO" id="GO:1902499">
    <property type="term" value="P:positive regulation of protein autoubiquitination"/>
    <property type="evidence" value="ECO:0000314"/>
    <property type="project" value="SGD"/>
</dbReference>
<dbReference type="GO" id="GO:0016567">
    <property type="term" value="P:protein ubiquitination"/>
    <property type="evidence" value="ECO:0000314"/>
    <property type="project" value="ComplexPortal"/>
</dbReference>
<dbReference type="GO" id="GO:0007131">
    <property type="term" value="P:reciprocal meiotic recombination"/>
    <property type="evidence" value="ECO:0000315"/>
    <property type="project" value="SGD"/>
</dbReference>
<dbReference type="GO" id="GO:0051445">
    <property type="term" value="P:regulation of meiotic cell cycle"/>
    <property type="evidence" value="ECO:0000303"/>
    <property type="project" value="ComplexPortal"/>
</dbReference>
<dbReference type="GO" id="GO:0007346">
    <property type="term" value="P:regulation of mitotic cell cycle"/>
    <property type="evidence" value="ECO:0000303"/>
    <property type="project" value="ComplexPortal"/>
</dbReference>
<dbReference type="GO" id="GO:0030071">
    <property type="term" value="P:regulation of mitotic metaphase/anaphase transition"/>
    <property type="evidence" value="ECO:0000315"/>
    <property type="project" value="SGD"/>
</dbReference>
<dbReference type="InterPro" id="IPR008402">
    <property type="entry name" value="APC_su15/mnd2"/>
</dbReference>
<dbReference type="InterPro" id="IPR016807">
    <property type="entry name" value="Mnd2"/>
</dbReference>
<dbReference type="Pfam" id="PF05841">
    <property type="entry name" value="Apc15p"/>
    <property type="match status" value="1"/>
</dbReference>
<dbReference type="PIRSF" id="PIRSF022699">
    <property type="entry name" value="MND2"/>
    <property type="match status" value="1"/>
</dbReference>
<sequence length="368" mass="42826">MARALRDISLFNDIRKDQNSAGAKHERYNMRDLRSKKNQHVNGIDDYEDDSLDRFIRRKKSRVVKYIPSLSAYNVFNEFPYYPTSASQLLDGKLDEFLMLSEQYKSRLPKIRKLGWNRFKPIGINKTMYELEMLRSRARAQNAEGNNEEDFRQHDSREEDPRNNGSIGRVILPHILQENEEYDTGEGVTGLHSMPNDSMAILANNSANNSQNEEVSEEDEISYDYDAEFDHVVDEDDNEEGEVPGEGVEGIEVQRERIVPDDLLMRPTSLSRSLQQFVEEAHHLDRNPYDIDSDNDGEDSKVELDMNPDFEDDVGREHDYNSEYSQEPTSYGGITPDLASNWRNWTRERITSLDELMERRARQQRGQD</sequence>
<name>MND2_YEAST</name>